<protein>
    <recommendedName>
        <fullName evidence="1">2,3-bisphosphoglycerate-independent phosphoglycerate mutase</fullName>
        <shortName evidence="1">BPG-independent PGAM</shortName>
        <shortName evidence="1">Phosphoglyceromutase</shortName>
        <shortName evidence="1">iPGM</shortName>
        <ecNumber evidence="1">5.4.2.12</ecNumber>
    </recommendedName>
</protein>
<sequence length="511" mass="57000">MSKRPVALIILDGFALREETYGNAVAQANKPNFDRYWNEYPHATLKACGEAVGLPEGQMGNSEVGHLNIGAGRIVYQSLTRVNIAIREGEFDRNETFLAAMNHVKQHGTSLHLFGLLSDGGVHSHIHHLYALLRLAAKEGVKRVYIHGFLDGRDVGPQTAPQYIKELQEKIKEYGVGEIATLSGRYYSMDRDKRWERVEKAYRAMVYGEGPTYRDPLECIEDSYKNGIYDEFVLPSVIVREDGSPVATIQDNDAIIFYNFRPDRAIQISNTFTNEDFREFDRGPKHPKNLFFVCLTHFSETVKGYVAFKPTNLDNTIGEVLSQHGLRQLRIAETEKYPHVTFFMSGGREEKFPGEDRILINSPKVATYDLKPEMSAYEVTEALLKEIAADKYDAIILNYANPDMVGHSGMLEPTIKAVEAVDECLGKVVDAILEKGGIAIITADHGNADEVLTPEGKPQTAHTTNPVPVIVTKHGIELRKDGILGDLAPTMLDLLGLPQPKEMTGKTLIVK</sequence>
<reference key="1">
    <citation type="journal article" date="2007" name="Proc. Natl. Acad. Sci. U.S.A.">
        <title>Genome and proteome of long-chain alkane degrading Geobacillus thermodenitrificans NG80-2 isolated from a deep-subsurface oil reservoir.</title>
        <authorList>
            <person name="Feng L."/>
            <person name="Wang W."/>
            <person name="Cheng J."/>
            <person name="Ren Y."/>
            <person name="Zhao G."/>
            <person name="Gao C."/>
            <person name="Tang Y."/>
            <person name="Liu X."/>
            <person name="Han W."/>
            <person name="Peng X."/>
            <person name="Liu R."/>
            <person name="Wang L."/>
        </authorList>
    </citation>
    <scope>NUCLEOTIDE SEQUENCE [LARGE SCALE GENOMIC DNA]</scope>
    <source>
        <strain>NG80-2</strain>
    </source>
</reference>
<organism>
    <name type="scientific">Geobacillus thermodenitrificans (strain NG80-2)</name>
    <dbReference type="NCBI Taxonomy" id="420246"/>
    <lineage>
        <taxon>Bacteria</taxon>
        <taxon>Bacillati</taxon>
        <taxon>Bacillota</taxon>
        <taxon>Bacilli</taxon>
        <taxon>Bacillales</taxon>
        <taxon>Anoxybacillaceae</taxon>
        <taxon>Geobacillus</taxon>
    </lineage>
</organism>
<evidence type="ECO:0000255" key="1">
    <source>
        <dbReference type="HAMAP-Rule" id="MF_01038"/>
    </source>
</evidence>
<name>GPMI_GEOTN</name>
<keyword id="KW-0324">Glycolysis</keyword>
<keyword id="KW-0413">Isomerase</keyword>
<keyword id="KW-0464">Manganese</keyword>
<keyword id="KW-0479">Metal-binding</keyword>
<keyword id="KW-0597">Phosphoprotein</keyword>
<dbReference type="EC" id="5.4.2.12" evidence="1"/>
<dbReference type="EMBL" id="CP000557">
    <property type="protein sequence ID" value="ABO68349.1"/>
    <property type="molecule type" value="Genomic_DNA"/>
</dbReference>
<dbReference type="RefSeq" id="WP_008880287.1">
    <property type="nucleotide sequence ID" value="NC_009328.1"/>
</dbReference>
<dbReference type="SMR" id="A4ISP5"/>
<dbReference type="GeneID" id="87622847"/>
<dbReference type="KEGG" id="gtn:GTNG_3004"/>
<dbReference type="eggNOG" id="COG0696">
    <property type="taxonomic scope" value="Bacteria"/>
</dbReference>
<dbReference type="HOGENOM" id="CLU_026099_2_0_9"/>
<dbReference type="UniPathway" id="UPA00109">
    <property type="reaction ID" value="UER00186"/>
</dbReference>
<dbReference type="Proteomes" id="UP000001578">
    <property type="component" value="Chromosome"/>
</dbReference>
<dbReference type="GO" id="GO:0005829">
    <property type="term" value="C:cytosol"/>
    <property type="evidence" value="ECO:0007669"/>
    <property type="project" value="TreeGrafter"/>
</dbReference>
<dbReference type="GO" id="GO:0030145">
    <property type="term" value="F:manganese ion binding"/>
    <property type="evidence" value="ECO:0007669"/>
    <property type="project" value="UniProtKB-UniRule"/>
</dbReference>
<dbReference type="GO" id="GO:0004619">
    <property type="term" value="F:phosphoglycerate mutase activity"/>
    <property type="evidence" value="ECO:0007669"/>
    <property type="project" value="UniProtKB-EC"/>
</dbReference>
<dbReference type="GO" id="GO:0006007">
    <property type="term" value="P:glucose catabolic process"/>
    <property type="evidence" value="ECO:0007669"/>
    <property type="project" value="InterPro"/>
</dbReference>
<dbReference type="GO" id="GO:0006096">
    <property type="term" value="P:glycolytic process"/>
    <property type="evidence" value="ECO:0007669"/>
    <property type="project" value="UniProtKB-UniRule"/>
</dbReference>
<dbReference type="CDD" id="cd16010">
    <property type="entry name" value="iPGM"/>
    <property type="match status" value="1"/>
</dbReference>
<dbReference type="FunFam" id="3.40.1450.10:FF:000001">
    <property type="entry name" value="2,3-bisphosphoglycerate-independent phosphoglycerate mutase"/>
    <property type="match status" value="1"/>
</dbReference>
<dbReference type="FunFam" id="3.40.720.10:FF:000001">
    <property type="entry name" value="2,3-bisphosphoglycerate-independent phosphoglycerate mutase"/>
    <property type="match status" value="1"/>
</dbReference>
<dbReference type="Gene3D" id="3.40.720.10">
    <property type="entry name" value="Alkaline Phosphatase, subunit A"/>
    <property type="match status" value="1"/>
</dbReference>
<dbReference type="Gene3D" id="3.40.1450.10">
    <property type="entry name" value="BPG-independent phosphoglycerate mutase, domain B"/>
    <property type="match status" value="1"/>
</dbReference>
<dbReference type="HAMAP" id="MF_01038">
    <property type="entry name" value="GpmI"/>
    <property type="match status" value="1"/>
</dbReference>
<dbReference type="InterPro" id="IPR017850">
    <property type="entry name" value="Alkaline_phosphatase_core_sf"/>
</dbReference>
<dbReference type="InterPro" id="IPR011258">
    <property type="entry name" value="BPG-indep_PGM_N"/>
</dbReference>
<dbReference type="InterPro" id="IPR006124">
    <property type="entry name" value="Metalloenzyme"/>
</dbReference>
<dbReference type="InterPro" id="IPR036646">
    <property type="entry name" value="PGAM_B_sf"/>
</dbReference>
<dbReference type="InterPro" id="IPR005995">
    <property type="entry name" value="Pgm_bpd_ind"/>
</dbReference>
<dbReference type="NCBIfam" id="TIGR01307">
    <property type="entry name" value="pgm_bpd_ind"/>
    <property type="match status" value="1"/>
</dbReference>
<dbReference type="PANTHER" id="PTHR31637">
    <property type="entry name" value="2,3-BISPHOSPHOGLYCERATE-INDEPENDENT PHOSPHOGLYCERATE MUTASE"/>
    <property type="match status" value="1"/>
</dbReference>
<dbReference type="PANTHER" id="PTHR31637:SF0">
    <property type="entry name" value="2,3-BISPHOSPHOGLYCERATE-INDEPENDENT PHOSPHOGLYCERATE MUTASE"/>
    <property type="match status" value="1"/>
</dbReference>
<dbReference type="Pfam" id="PF06415">
    <property type="entry name" value="iPGM_N"/>
    <property type="match status" value="1"/>
</dbReference>
<dbReference type="Pfam" id="PF01676">
    <property type="entry name" value="Metalloenzyme"/>
    <property type="match status" value="1"/>
</dbReference>
<dbReference type="PIRSF" id="PIRSF001492">
    <property type="entry name" value="IPGAM"/>
    <property type="match status" value="1"/>
</dbReference>
<dbReference type="SUPFAM" id="SSF64158">
    <property type="entry name" value="2,3-Bisphosphoglycerate-independent phosphoglycerate mutase, substrate-binding domain"/>
    <property type="match status" value="1"/>
</dbReference>
<dbReference type="SUPFAM" id="SSF53649">
    <property type="entry name" value="Alkaline phosphatase-like"/>
    <property type="match status" value="1"/>
</dbReference>
<feature type="chain" id="PRO_1000063973" description="2,3-bisphosphoglycerate-independent phosphoglycerate mutase">
    <location>
        <begin position="1"/>
        <end position="511"/>
    </location>
</feature>
<feature type="active site" description="Phosphoserine intermediate" evidence="1">
    <location>
        <position position="62"/>
    </location>
</feature>
<feature type="binding site" evidence="1">
    <location>
        <position position="12"/>
    </location>
    <ligand>
        <name>Mn(2+)</name>
        <dbReference type="ChEBI" id="CHEBI:29035"/>
        <label>2</label>
    </ligand>
</feature>
<feature type="binding site" evidence="1">
    <location>
        <position position="62"/>
    </location>
    <ligand>
        <name>Mn(2+)</name>
        <dbReference type="ChEBI" id="CHEBI:29035"/>
        <label>2</label>
    </ligand>
</feature>
<feature type="binding site" evidence="1">
    <location>
        <position position="123"/>
    </location>
    <ligand>
        <name>substrate</name>
    </ligand>
</feature>
<feature type="binding site" evidence="1">
    <location>
        <begin position="153"/>
        <end position="154"/>
    </location>
    <ligand>
        <name>substrate</name>
    </ligand>
</feature>
<feature type="binding site" evidence="1">
    <location>
        <position position="185"/>
    </location>
    <ligand>
        <name>substrate</name>
    </ligand>
</feature>
<feature type="binding site" evidence="1">
    <location>
        <position position="191"/>
    </location>
    <ligand>
        <name>substrate</name>
    </ligand>
</feature>
<feature type="binding site" evidence="1">
    <location>
        <begin position="261"/>
        <end position="264"/>
    </location>
    <ligand>
        <name>substrate</name>
    </ligand>
</feature>
<feature type="binding site" evidence="1">
    <location>
        <position position="336"/>
    </location>
    <ligand>
        <name>substrate</name>
    </ligand>
</feature>
<feature type="binding site" evidence="1">
    <location>
        <position position="403"/>
    </location>
    <ligand>
        <name>Mn(2+)</name>
        <dbReference type="ChEBI" id="CHEBI:29035"/>
        <label>1</label>
    </ligand>
</feature>
<feature type="binding site" evidence="1">
    <location>
        <position position="407"/>
    </location>
    <ligand>
        <name>Mn(2+)</name>
        <dbReference type="ChEBI" id="CHEBI:29035"/>
        <label>1</label>
    </ligand>
</feature>
<feature type="binding site" evidence="1">
    <location>
        <position position="444"/>
    </location>
    <ligand>
        <name>Mn(2+)</name>
        <dbReference type="ChEBI" id="CHEBI:29035"/>
        <label>2</label>
    </ligand>
</feature>
<feature type="binding site" evidence="1">
    <location>
        <position position="445"/>
    </location>
    <ligand>
        <name>Mn(2+)</name>
        <dbReference type="ChEBI" id="CHEBI:29035"/>
        <label>2</label>
    </ligand>
</feature>
<feature type="binding site" evidence="1">
    <location>
        <position position="462"/>
    </location>
    <ligand>
        <name>Mn(2+)</name>
        <dbReference type="ChEBI" id="CHEBI:29035"/>
        <label>1</label>
    </ligand>
</feature>
<feature type="modified residue" description="Phosphotyrosine" evidence="1">
    <location>
        <position position="36"/>
    </location>
</feature>
<proteinExistence type="inferred from homology"/>
<gene>
    <name evidence="1" type="primary">gpmI</name>
    <name type="ordered locus">GTNG_3004</name>
</gene>
<accession>A4ISP5</accession>
<comment type="function">
    <text evidence="1">Catalyzes the interconversion of 2-phosphoglycerate and 3-phosphoglycerate.</text>
</comment>
<comment type="catalytic activity">
    <reaction evidence="1">
        <text>(2R)-2-phosphoglycerate = (2R)-3-phosphoglycerate</text>
        <dbReference type="Rhea" id="RHEA:15901"/>
        <dbReference type="ChEBI" id="CHEBI:58272"/>
        <dbReference type="ChEBI" id="CHEBI:58289"/>
        <dbReference type="EC" id="5.4.2.12"/>
    </reaction>
</comment>
<comment type="cofactor">
    <cofactor evidence="1">
        <name>Mn(2+)</name>
        <dbReference type="ChEBI" id="CHEBI:29035"/>
    </cofactor>
    <text evidence="1">Binds 2 manganese ions per subunit.</text>
</comment>
<comment type="pathway">
    <text evidence="1">Carbohydrate degradation; glycolysis; pyruvate from D-glyceraldehyde 3-phosphate: step 3/5.</text>
</comment>
<comment type="subunit">
    <text evidence="1">Monomer.</text>
</comment>
<comment type="similarity">
    <text evidence="1">Belongs to the BPG-independent phosphoglycerate mutase family.</text>
</comment>